<comment type="function">
    <text evidence="1">Necessary for efficient RNA polymerase transcription elongation past template-encoded arresting sites. The arresting sites in DNA have the property of trapping a certain fraction of elongating RNA polymerases that pass through, resulting in locked ternary complexes. Cleavage of the nascent transcript by cleavage factors such as GreA or GreB allows the resumption of elongation from the new 3'terminus. GreA releases sequences of 2 to 3 nucleotides.</text>
</comment>
<comment type="similarity">
    <text evidence="1">Belongs to the GreA/GreB family.</text>
</comment>
<proteinExistence type="inferred from homology"/>
<keyword id="KW-0175">Coiled coil</keyword>
<keyword id="KW-0238">DNA-binding</keyword>
<keyword id="KW-1185">Reference proteome</keyword>
<keyword id="KW-0804">Transcription</keyword>
<keyword id="KW-0805">Transcription regulation</keyword>
<evidence type="ECO:0000255" key="1">
    <source>
        <dbReference type="HAMAP-Rule" id="MF_00105"/>
    </source>
</evidence>
<feature type="chain" id="PRO_1000034257" description="Transcription elongation factor GreA">
    <location>
        <begin position="1"/>
        <end position="159"/>
    </location>
</feature>
<feature type="coiled-coil region" evidence="1">
    <location>
        <begin position="3"/>
        <end position="37"/>
    </location>
</feature>
<dbReference type="EMBL" id="CP000568">
    <property type="protein sequence ID" value="ABN54095.1"/>
    <property type="molecule type" value="Genomic_DNA"/>
</dbReference>
<dbReference type="RefSeq" id="WP_003514606.1">
    <property type="nucleotide sequence ID" value="NC_009012.1"/>
</dbReference>
<dbReference type="SMR" id="A3DJG6"/>
<dbReference type="STRING" id="203119.Cthe_2897"/>
<dbReference type="GeneID" id="35804308"/>
<dbReference type="KEGG" id="cth:Cthe_2897"/>
<dbReference type="eggNOG" id="COG0782">
    <property type="taxonomic scope" value="Bacteria"/>
</dbReference>
<dbReference type="HOGENOM" id="CLU_101379_2_1_9"/>
<dbReference type="OrthoDB" id="9808774at2"/>
<dbReference type="Proteomes" id="UP000002145">
    <property type="component" value="Chromosome"/>
</dbReference>
<dbReference type="GO" id="GO:0003677">
    <property type="term" value="F:DNA binding"/>
    <property type="evidence" value="ECO:0007669"/>
    <property type="project" value="UniProtKB-UniRule"/>
</dbReference>
<dbReference type="GO" id="GO:0070063">
    <property type="term" value="F:RNA polymerase binding"/>
    <property type="evidence" value="ECO:0007669"/>
    <property type="project" value="InterPro"/>
</dbReference>
<dbReference type="GO" id="GO:0006354">
    <property type="term" value="P:DNA-templated transcription elongation"/>
    <property type="evidence" value="ECO:0007669"/>
    <property type="project" value="TreeGrafter"/>
</dbReference>
<dbReference type="GO" id="GO:0032784">
    <property type="term" value="P:regulation of DNA-templated transcription elongation"/>
    <property type="evidence" value="ECO:0007669"/>
    <property type="project" value="UniProtKB-UniRule"/>
</dbReference>
<dbReference type="FunFam" id="1.10.287.180:FF:000001">
    <property type="entry name" value="Transcription elongation factor GreA"/>
    <property type="match status" value="1"/>
</dbReference>
<dbReference type="FunFam" id="3.10.50.30:FF:000001">
    <property type="entry name" value="Transcription elongation factor GreA"/>
    <property type="match status" value="1"/>
</dbReference>
<dbReference type="Gene3D" id="3.10.50.30">
    <property type="entry name" value="Transcription elongation factor, GreA/GreB, C-terminal domain"/>
    <property type="match status" value="1"/>
</dbReference>
<dbReference type="Gene3D" id="1.10.287.180">
    <property type="entry name" value="Transcription elongation factor, GreA/GreB, N-terminal domain"/>
    <property type="match status" value="1"/>
</dbReference>
<dbReference type="HAMAP" id="MF_00105">
    <property type="entry name" value="GreA_GreB"/>
    <property type="match status" value="1"/>
</dbReference>
<dbReference type="InterPro" id="IPR036953">
    <property type="entry name" value="GreA/GreB_C_sf"/>
</dbReference>
<dbReference type="InterPro" id="IPR018151">
    <property type="entry name" value="TF_GreA/GreB_CS"/>
</dbReference>
<dbReference type="InterPro" id="IPR006359">
    <property type="entry name" value="Tscrpt_elong_fac_GreA"/>
</dbReference>
<dbReference type="InterPro" id="IPR028624">
    <property type="entry name" value="Tscrpt_elong_fac_GreA/B"/>
</dbReference>
<dbReference type="InterPro" id="IPR001437">
    <property type="entry name" value="Tscrpt_elong_fac_GreA/B_C"/>
</dbReference>
<dbReference type="InterPro" id="IPR023459">
    <property type="entry name" value="Tscrpt_elong_fac_GreA/B_fam"/>
</dbReference>
<dbReference type="InterPro" id="IPR022691">
    <property type="entry name" value="Tscrpt_elong_fac_GreA/B_N"/>
</dbReference>
<dbReference type="InterPro" id="IPR036805">
    <property type="entry name" value="Tscrpt_elong_fac_GreA/B_N_sf"/>
</dbReference>
<dbReference type="NCBIfam" id="TIGR01462">
    <property type="entry name" value="greA"/>
    <property type="match status" value="1"/>
</dbReference>
<dbReference type="NCBIfam" id="NF001261">
    <property type="entry name" value="PRK00226.1-2"/>
    <property type="match status" value="1"/>
</dbReference>
<dbReference type="NCBIfam" id="NF001263">
    <property type="entry name" value="PRK00226.1-4"/>
    <property type="match status" value="1"/>
</dbReference>
<dbReference type="PANTHER" id="PTHR30437">
    <property type="entry name" value="TRANSCRIPTION ELONGATION FACTOR GREA"/>
    <property type="match status" value="1"/>
</dbReference>
<dbReference type="PANTHER" id="PTHR30437:SF4">
    <property type="entry name" value="TRANSCRIPTION ELONGATION FACTOR GREA"/>
    <property type="match status" value="1"/>
</dbReference>
<dbReference type="Pfam" id="PF01272">
    <property type="entry name" value="GreA_GreB"/>
    <property type="match status" value="1"/>
</dbReference>
<dbReference type="Pfam" id="PF03449">
    <property type="entry name" value="GreA_GreB_N"/>
    <property type="match status" value="1"/>
</dbReference>
<dbReference type="PIRSF" id="PIRSF006092">
    <property type="entry name" value="GreA_GreB"/>
    <property type="match status" value="1"/>
</dbReference>
<dbReference type="SUPFAM" id="SSF54534">
    <property type="entry name" value="FKBP-like"/>
    <property type="match status" value="1"/>
</dbReference>
<dbReference type="SUPFAM" id="SSF46557">
    <property type="entry name" value="GreA transcript cleavage protein, N-terminal domain"/>
    <property type="match status" value="1"/>
</dbReference>
<dbReference type="PROSITE" id="PS00829">
    <property type="entry name" value="GREAB_1"/>
    <property type="match status" value="1"/>
</dbReference>
<dbReference type="PROSITE" id="PS00830">
    <property type="entry name" value="GREAB_2"/>
    <property type="match status" value="1"/>
</dbReference>
<organism>
    <name type="scientific">Acetivibrio thermocellus (strain ATCC 27405 / DSM 1237 / JCM 9322 / NBRC 103400 / NCIMB 10682 / NRRL B-4536 / VPI 7372)</name>
    <name type="common">Clostridium thermocellum</name>
    <dbReference type="NCBI Taxonomy" id="203119"/>
    <lineage>
        <taxon>Bacteria</taxon>
        <taxon>Bacillati</taxon>
        <taxon>Bacillota</taxon>
        <taxon>Clostridia</taxon>
        <taxon>Eubacteriales</taxon>
        <taxon>Oscillospiraceae</taxon>
        <taxon>Acetivibrio</taxon>
    </lineage>
</organism>
<sequence length="159" mass="17976">MATNKEVVLTYEGLQKLEQELENLKTVKRREVAERIKQALSFGDISENSEYDEAKNEQAYIEGRIFQLENMLKNAKVIDEEDIQTDVVSIGSKVKVLDMEFDEEVEYYIVGSTEADPSQYKISNESPVGKALIGGKIGDIVEVTVPDGVIKFKILEIRK</sequence>
<reference key="1">
    <citation type="submission" date="2007-02" db="EMBL/GenBank/DDBJ databases">
        <title>Complete sequence of Clostridium thermocellum ATCC 27405.</title>
        <authorList>
            <consortium name="US DOE Joint Genome Institute"/>
            <person name="Copeland A."/>
            <person name="Lucas S."/>
            <person name="Lapidus A."/>
            <person name="Barry K."/>
            <person name="Detter J.C."/>
            <person name="Glavina del Rio T."/>
            <person name="Hammon N."/>
            <person name="Israni S."/>
            <person name="Dalin E."/>
            <person name="Tice H."/>
            <person name="Pitluck S."/>
            <person name="Chertkov O."/>
            <person name="Brettin T."/>
            <person name="Bruce D."/>
            <person name="Han C."/>
            <person name="Tapia R."/>
            <person name="Gilna P."/>
            <person name="Schmutz J."/>
            <person name="Larimer F."/>
            <person name="Land M."/>
            <person name="Hauser L."/>
            <person name="Kyrpides N."/>
            <person name="Mikhailova N."/>
            <person name="Wu J.H.D."/>
            <person name="Newcomb M."/>
            <person name="Richardson P."/>
        </authorList>
    </citation>
    <scope>NUCLEOTIDE SEQUENCE [LARGE SCALE GENOMIC DNA]</scope>
    <source>
        <strain>ATCC 27405 / DSM 1237 / JCM 9322 / NBRC 103400 / NCIMB 10682 / NRRL B-4536 / VPI 7372</strain>
    </source>
</reference>
<accession>A3DJG6</accession>
<gene>
    <name evidence="1" type="primary">greA</name>
    <name type="ordered locus">Cthe_2897</name>
</gene>
<name>GREA_ACET2</name>
<protein>
    <recommendedName>
        <fullName evidence="1">Transcription elongation factor GreA</fullName>
    </recommendedName>
    <alternativeName>
        <fullName evidence="1">Transcript cleavage factor GreA</fullName>
    </alternativeName>
</protein>